<reference key="1">
    <citation type="journal article" date="2005" name="Genome Res.">
        <title>Comparative and functional genomic analyses of the pathogenicity of phytopathogen Xanthomonas campestris pv. campestris.</title>
        <authorList>
            <person name="Qian W."/>
            <person name="Jia Y."/>
            <person name="Ren S.-X."/>
            <person name="He Y.-Q."/>
            <person name="Feng J.-X."/>
            <person name="Lu L.-F."/>
            <person name="Sun Q."/>
            <person name="Ying G."/>
            <person name="Tang D.-J."/>
            <person name="Tang H."/>
            <person name="Wu W."/>
            <person name="Hao P."/>
            <person name="Wang L."/>
            <person name="Jiang B.-L."/>
            <person name="Zeng S."/>
            <person name="Gu W.-Y."/>
            <person name="Lu G."/>
            <person name="Rong L."/>
            <person name="Tian Y."/>
            <person name="Yao Z."/>
            <person name="Fu G."/>
            <person name="Chen B."/>
            <person name="Fang R."/>
            <person name="Qiang B."/>
            <person name="Chen Z."/>
            <person name="Zhao G.-P."/>
            <person name="Tang J.-L."/>
            <person name="He C."/>
        </authorList>
    </citation>
    <scope>NUCLEOTIDE SEQUENCE [LARGE SCALE GENOMIC DNA]</scope>
    <source>
        <strain>8004</strain>
    </source>
</reference>
<dbReference type="EC" id="4.2.1.59" evidence="1"/>
<dbReference type="EMBL" id="CP000050">
    <property type="protein sequence ID" value="AAY49924.1"/>
    <property type="molecule type" value="Genomic_DNA"/>
</dbReference>
<dbReference type="RefSeq" id="WP_011036554.1">
    <property type="nucleotide sequence ID" value="NZ_CP155948.1"/>
</dbReference>
<dbReference type="SMR" id="Q4USP9"/>
<dbReference type="KEGG" id="xcb:XC_2876"/>
<dbReference type="HOGENOM" id="CLU_078912_1_0_6"/>
<dbReference type="Proteomes" id="UP000000420">
    <property type="component" value="Chromosome"/>
</dbReference>
<dbReference type="GO" id="GO:0005737">
    <property type="term" value="C:cytoplasm"/>
    <property type="evidence" value="ECO:0007669"/>
    <property type="project" value="UniProtKB-SubCell"/>
</dbReference>
<dbReference type="GO" id="GO:0016020">
    <property type="term" value="C:membrane"/>
    <property type="evidence" value="ECO:0007669"/>
    <property type="project" value="GOC"/>
</dbReference>
<dbReference type="GO" id="GO:0019171">
    <property type="term" value="F:(3R)-hydroxyacyl-[acyl-carrier-protein] dehydratase activity"/>
    <property type="evidence" value="ECO:0007669"/>
    <property type="project" value="UniProtKB-EC"/>
</dbReference>
<dbReference type="GO" id="GO:0006633">
    <property type="term" value="P:fatty acid biosynthetic process"/>
    <property type="evidence" value="ECO:0007669"/>
    <property type="project" value="UniProtKB-UniRule"/>
</dbReference>
<dbReference type="GO" id="GO:0009245">
    <property type="term" value="P:lipid A biosynthetic process"/>
    <property type="evidence" value="ECO:0007669"/>
    <property type="project" value="UniProtKB-UniRule"/>
</dbReference>
<dbReference type="CDD" id="cd01288">
    <property type="entry name" value="FabZ"/>
    <property type="match status" value="1"/>
</dbReference>
<dbReference type="FunFam" id="3.10.129.10:FF:000001">
    <property type="entry name" value="3-hydroxyacyl-[acyl-carrier-protein] dehydratase FabZ"/>
    <property type="match status" value="1"/>
</dbReference>
<dbReference type="Gene3D" id="3.10.129.10">
    <property type="entry name" value="Hotdog Thioesterase"/>
    <property type="match status" value="1"/>
</dbReference>
<dbReference type="HAMAP" id="MF_00406">
    <property type="entry name" value="FabZ"/>
    <property type="match status" value="1"/>
</dbReference>
<dbReference type="InterPro" id="IPR013114">
    <property type="entry name" value="FabA_FabZ"/>
</dbReference>
<dbReference type="InterPro" id="IPR010084">
    <property type="entry name" value="FabZ"/>
</dbReference>
<dbReference type="InterPro" id="IPR029069">
    <property type="entry name" value="HotDog_dom_sf"/>
</dbReference>
<dbReference type="NCBIfam" id="TIGR01750">
    <property type="entry name" value="fabZ"/>
    <property type="match status" value="1"/>
</dbReference>
<dbReference type="NCBIfam" id="NF000582">
    <property type="entry name" value="PRK00006.1"/>
    <property type="match status" value="1"/>
</dbReference>
<dbReference type="PANTHER" id="PTHR30272">
    <property type="entry name" value="3-HYDROXYACYL-[ACYL-CARRIER-PROTEIN] DEHYDRATASE"/>
    <property type="match status" value="1"/>
</dbReference>
<dbReference type="PANTHER" id="PTHR30272:SF1">
    <property type="entry name" value="3-HYDROXYACYL-[ACYL-CARRIER-PROTEIN] DEHYDRATASE"/>
    <property type="match status" value="1"/>
</dbReference>
<dbReference type="Pfam" id="PF07977">
    <property type="entry name" value="FabA"/>
    <property type="match status" value="1"/>
</dbReference>
<dbReference type="SUPFAM" id="SSF54637">
    <property type="entry name" value="Thioesterase/thiol ester dehydrase-isomerase"/>
    <property type="match status" value="1"/>
</dbReference>
<accession>Q4USP9</accession>
<name>FABZ_XANC8</name>
<comment type="function">
    <text evidence="1">Involved in unsaturated fatty acids biosynthesis. Catalyzes the dehydration of short chain beta-hydroxyacyl-ACPs and long chain saturated and unsaturated beta-hydroxyacyl-ACPs.</text>
</comment>
<comment type="catalytic activity">
    <reaction evidence="1">
        <text>a (3R)-hydroxyacyl-[ACP] = a (2E)-enoyl-[ACP] + H2O</text>
        <dbReference type="Rhea" id="RHEA:13097"/>
        <dbReference type="Rhea" id="RHEA-COMP:9925"/>
        <dbReference type="Rhea" id="RHEA-COMP:9945"/>
        <dbReference type="ChEBI" id="CHEBI:15377"/>
        <dbReference type="ChEBI" id="CHEBI:78784"/>
        <dbReference type="ChEBI" id="CHEBI:78827"/>
        <dbReference type="EC" id="4.2.1.59"/>
    </reaction>
</comment>
<comment type="subcellular location">
    <subcellularLocation>
        <location evidence="1">Cytoplasm</location>
    </subcellularLocation>
</comment>
<comment type="similarity">
    <text evidence="1">Belongs to the thioester dehydratase family. FabZ subfamily.</text>
</comment>
<evidence type="ECO:0000255" key="1">
    <source>
        <dbReference type="HAMAP-Rule" id="MF_00406"/>
    </source>
</evidence>
<gene>
    <name evidence="1" type="primary">fabZ</name>
    <name type="ordered locus">XC_2876</name>
</gene>
<keyword id="KW-0963">Cytoplasm</keyword>
<keyword id="KW-0441">Lipid A biosynthesis</keyword>
<keyword id="KW-0444">Lipid biosynthesis</keyword>
<keyword id="KW-0443">Lipid metabolism</keyword>
<keyword id="KW-0456">Lyase</keyword>
<organism>
    <name type="scientific">Xanthomonas campestris pv. campestris (strain 8004)</name>
    <dbReference type="NCBI Taxonomy" id="314565"/>
    <lineage>
        <taxon>Bacteria</taxon>
        <taxon>Pseudomonadati</taxon>
        <taxon>Pseudomonadota</taxon>
        <taxon>Gammaproteobacteria</taxon>
        <taxon>Lysobacterales</taxon>
        <taxon>Lysobacteraceae</taxon>
        <taxon>Xanthomonas</taxon>
    </lineage>
</organism>
<proteinExistence type="inferred from homology"/>
<sequence length="153" mass="17122">MSHPIYELPIDVNQIQTLIPHRYPFLLIDRVIELDLEAKRIVGQKNVTINEPFFQGHFPTRPVMPGVLIIEALAQAGGVMTQLGLGRDALSKLFYMVKVDNARFNKQVVPGDVLILEVQMKRLIRNMGCYYGEAKVNGEIVASAEVMCAGARE</sequence>
<feature type="chain" id="PRO_0000230849" description="3-hydroxyacyl-[acyl-carrier-protein] dehydratase FabZ">
    <location>
        <begin position="1"/>
        <end position="153"/>
    </location>
</feature>
<feature type="active site" evidence="1">
    <location>
        <position position="57"/>
    </location>
</feature>
<protein>
    <recommendedName>
        <fullName evidence="1">3-hydroxyacyl-[acyl-carrier-protein] dehydratase FabZ</fullName>
        <ecNumber evidence="1">4.2.1.59</ecNumber>
    </recommendedName>
    <alternativeName>
        <fullName evidence="1">(3R)-hydroxymyristoyl-[acyl-carrier-protein] dehydratase</fullName>
        <shortName evidence="1">(3R)-hydroxymyristoyl-ACP dehydrase</shortName>
    </alternativeName>
    <alternativeName>
        <fullName evidence="1">Beta-hydroxyacyl-ACP dehydratase</fullName>
    </alternativeName>
</protein>